<comment type="function">
    <text evidence="1">One of two assembly initiator proteins, it binds directly to the 5'-end of the 23S rRNA, where it nucleates assembly of the 50S subunit.</text>
</comment>
<comment type="function">
    <text evidence="1">One of the proteins that surrounds the polypeptide exit tunnel on the outside of the subunit.</text>
</comment>
<comment type="subunit">
    <text evidence="1">Part of the 50S ribosomal subunit.</text>
</comment>
<comment type="similarity">
    <text evidence="1">Belongs to the universal ribosomal protein uL24 family.</text>
</comment>
<sequence>MKIHKGDMVIVISGPDKGAKGKVIEAYPKRDKVLVEGVNRVKKHVANSATERGAESGGIVTQEAPIHVSNVAIVDSEGNPTRVGYRFDENGKKVRIARSNGKDI</sequence>
<dbReference type="EMBL" id="CP001601">
    <property type="protein sequence ID" value="ACP32022.1"/>
    <property type="molecule type" value="Genomic_DNA"/>
</dbReference>
<dbReference type="RefSeq" id="WP_005527724.1">
    <property type="nucleotide sequence ID" value="NZ_ACLH01000063.1"/>
</dbReference>
<dbReference type="SMR" id="C3PL18"/>
<dbReference type="STRING" id="548476.cauri_0423"/>
<dbReference type="GeneID" id="72411296"/>
<dbReference type="KEGG" id="car:cauri_0423"/>
<dbReference type="eggNOG" id="COG0198">
    <property type="taxonomic scope" value="Bacteria"/>
</dbReference>
<dbReference type="HOGENOM" id="CLU_093315_2_0_11"/>
<dbReference type="OrthoDB" id="9807419at2"/>
<dbReference type="Proteomes" id="UP000002077">
    <property type="component" value="Chromosome"/>
</dbReference>
<dbReference type="GO" id="GO:1990904">
    <property type="term" value="C:ribonucleoprotein complex"/>
    <property type="evidence" value="ECO:0007669"/>
    <property type="project" value="UniProtKB-KW"/>
</dbReference>
<dbReference type="GO" id="GO:0005840">
    <property type="term" value="C:ribosome"/>
    <property type="evidence" value="ECO:0007669"/>
    <property type="project" value="UniProtKB-KW"/>
</dbReference>
<dbReference type="GO" id="GO:0019843">
    <property type="term" value="F:rRNA binding"/>
    <property type="evidence" value="ECO:0007669"/>
    <property type="project" value="UniProtKB-UniRule"/>
</dbReference>
<dbReference type="GO" id="GO:0003735">
    <property type="term" value="F:structural constituent of ribosome"/>
    <property type="evidence" value="ECO:0007669"/>
    <property type="project" value="InterPro"/>
</dbReference>
<dbReference type="GO" id="GO:0006412">
    <property type="term" value="P:translation"/>
    <property type="evidence" value="ECO:0007669"/>
    <property type="project" value="UniProtKB-UniRule"/>
</dbReference>
<dbReference type="CDD" id="cd06089">
    <property type="entry name" value="KOW_RPL26"/>
    <property type="match status" value="1"/>
</dbReference>
<dbReference type="FunFam" id="2.30.30.30:FF:000004">
    <property type="entry name" value="50S ribosomal protein L24"/>
    <property type="match status" value="1"/>
</dbReference>
<dbReference type="Gene3D" id="2.30.30.30">
    <property type="match status" value="1"/>
</dbReference>
<dbReference type="HAMAP" id="MF_01326_B">
    <property type="entry name" value="Ribosomal_uL24_B"/>
    <property type="match status" value="1"/>
</dbReference>
<dbReference type="InterPro" id="IPR005824">
    <property type="entry name" value="KOW"/>
</dbReference>
<dbReference type="InterPro" id="IPR014722">
    <property type="entry name" value="Rib_uL2_dom2"/>
</dbReference>
<dbReference type="InterPro" id="IPR003256">
    <property type="entry name" value="Ribosomal_uL24"/>
</dbReference>
<dbReference type="InterPro" id="IPR005825">
    <property type="entry name" value="Ribosomal_uL24_CS"/>
</dbReference>
<dbReference type="InterPro" id="IPR041988">
    <property type="entry name" value="Ribosomal_uL24_KOW"/>
</dbReference>
<dbReference type="InterPro" id="IPR008991">
    <property type="entry name" value="Translation_prot_SH3-like_sf"/>
</dbReference>
<dbReference type="NCBIfam" id="TIGR01079">
    <property type="entry name" value="rplX_bact"/>
    <property type="match status" value="1"/>
</dbReference>
<dbReference type="PANTHER" id="PTHR12903">
    <property type="entry name" value="MITOCHONDRIAL RIBOSOMAL PROTEIN L24"/>
    <property type="match status" value="1"/>
</dbReference>
<dbReference type="Pfam" id="PF00467">
    <property type="entry name" value="KOW"/>
    <property type="match status" value="1"/>
</dbReference>
<dbReference type="Pfam" id="PF17136">
    <property type="entry name" value="ribosomal_L24"/>
    <property type="match status" value="1"/>
</dbReference>
<dbReference type="SMART" id="SM00739">
    <property type="entry name" value="KOW"/>
    <property type="match status" value="1"/>
</dbReference>
<dbReference type="SUPFAM" id="SSF50104">
    <property type="entry name" value="Translation proteins SH3-like domain"/>
    <property type="match status" value="1"/>
</dbReference>
<dbReference type="PROSITE" id="PS01108">
    <property type="entry name" value="RIBOSOMAL_L24"/>
    <property type="match status" value="1"/>
</dbReference>
<evidence type="ECO:0000255" key="1">
    <source>
        <dbReference type="HAMAP-Rule" id="MF_01326"/>
    </source>
</evidence>
<evidence type="ECO:0000305" key="2"/>
<gene>
    <name evidence="1" type="primary">rplX</name>
    <name type="ordered locus">cauri_0423</name>
</gene>
<feature type="chain" id="PRO_1000165938" description="Large ribosomal subunit protein uL24">
    <location>
        <begin position="1"/>
        <end position="104"/>
    </location>
</feature>
<accession>C3PL18</accession>
<protein>
    <recommendedName>
        <fullName evidence="1">Large ribosomal subunit protein uL24</fullName>
    </recommendedName>
    <alternativeName>
        <fullName evidence="2">50S ribosomal protein L24</fullName>
    </alternativeName>
</protein>
<reference key="1">
    <citation type="journal article" date="2010" name="BMC Genomics">
        <title>Complete genome sequence and lifestyle of black-pigmented Corynebacterium aurimucosum ATCC 700975 (formerly C. nigricans CN-1) isolated from a vaginal swab of a woman with spontaneous abortion.</title>
        <authorList>
            <person name="Trost E."/>
            <person name="Gotker S."/>
            <person name="Schneider J."/>
            <person name="Schneiker-Bekel S."/>
            <person name="Szczepanowski R."/>
            <person name="Tilker A."/>
            <person name="Viehoever P."/>
            <person name="Arnold W."/>
            <person name="Bekel T."/>
            <person name="Blom J."/>
            <person name="Gartemann K.H."/>
            <person name="Linke B."/>
            <person name="Goesmann A."/>
            <person name="Puhler A."/>
            <person name="Shukla S.K."/>
            <person name="Tauch A."/>
        </authorList>
    </citation>
    <scope>NUCLEOTIDE SEQUENCE [LARGE SCALE GENOMIC DNA]</scope>
    <source>
        <strain>ATCC 700975 / DSM 44827 / CIP 107346 / CN-1</strain>
    </source>
</reference>
<name>RL24_CORA7</name>
<organism>
    <name type="scientific">Corynebacterium aurimucosum (strain ATCC 700975 / DSM 44827 / CIP 107346 / CN-1)</name>
    <name type="common">Corynebacterium nigricans</name>
    <dbReference type="NCBI Taxonomy" id="548476"/>
    <lineage>
        <taxon>Bacteria</taxon>
        <taxon>Bacillati</taxon>
        <taxon>Actinomycetota</taxon>
        <taxon>Actinomycetes</taxon>
        <taxon>Mycobacteriales</taxon>
        <taxon>Corynebacteriaceae</taxon>
        <taxon>Corynebacterium</taxon>
    </lineage>
</organism>
<proteinExistence type="inferred from homology"/>
<keyword id="KW-1185">Reference proteome</keyword>
<keyword id="KW-0687">Ribonucleoprotein</keyword>
<keyword id="KW-0689">Ribosomal protein</keyword>
<keyword id="KW-0694">RNA-binding</keyword>
<keyword id="KW-0699">rRNA-binding</keyword>